<feature type="signal peptide" evidence="1">
    <location>
        <begin position="1"/>
        <end position="21"/>
    </location>
</feature>
<feature type="chain" id="PRO_0000417922" description="Uncharacterized shell protein 2" evidence="1">
    <location>
        <begin position="22"/>
        <end position="225"/>
    </location>
</feature>
<accession>H2A0M5</accession>
<sequence>MSLHYYLFIFWILAFVQFSHATYQYEVRMCVVGKSTPQNTYGYGSKRVGRYGIYGDCGCFQKPVGCPRLWYPQYNKACAPMDHWINIPQKQTQLEEVTNWRTATVEEVQRTPLETWNVERTPVETWNLQKNQQGPHSVVKSKVYKKSVYNAKRKVKSLYTKTKKTYAKPVKKYKTIEVITYRKVKVEHIQCCPPLKFWFFDFPDFVEVSDANGNGAKSTNEQFSK</sequence>
<protein>
    <recommendedName>
        <fullName>Uncharacterized shell protein 2</fullName>
    </recommendedName>
    <alternativeName>
        <fullName>Prism uncharacterized shell protein 10</fullName>
        <shortName>PUSP10</shortName>
    </alternativeName>
</protein>
<reference evidence="3" key="1">
    <citation type="journal article" date="2010" name="BMC Genomics">
        <title>Transcriptome and proteome analysis of Pinctada margaritifera calcifying mantle and shell: focus on biomineralization.</title>
        <authorList>
            <person name="Joubert C."/>
            <person name="Piquemal D."/>
            <person name="Marie B."/>
            <person name="Manchon L."/>
            <person name="Pierrat F."/>
            <person name="Zanella-Cleon I."/>
            <person name="Cochennec-Laureau N."/>
            <person name="Gueguen Y."/>
            <person name="Montagnani C."/>
        </authorList>
    </citation>
    <scope>NUCLEOTIDE SEQUENCE [MRNA]</scope>
    <scope>IDENTIFICATION</scope>
    <source>
        <tissue>Mantle</tissue>
    </source>
</reference>
<reference key="2">
    <citation type="journal article" date="2012" name="Proc. Natl. Acad. Sci. U.S.A.">
        <title>Different secretory repertoires control the biomineralization processes of prism and nacre deposition of the pearl oyster shell.</title>
        <authorList>
            <person name="Marie B."/>
            <person name="Joubert C."/>
            <person name="Tayale A."/>
            <person name="Zanella-Cleon I."/>
            <person name="Belliard C."/>
            <person name="Piquemal D."/>
            <person name="Cochennec-Laureau N."/>
            <person name="Marin F."/>
            <person name="Gueguen Y."/>
            <person name="Montagnani C."/>
        </authorList>
    </citation>
    <scope>PROTEIN SEQUENCE OF 121-130</scope>
    <scope>SUBCELLULAR LOCATION</scope>
    <scope>TISSUE SPECIFICITY</scope>
    <source>
        <tissue>Shell</tissue>
    </source>
</reference>
<organism>
    <name type="scientific">Margaritifera margaritifera</name>
    <name type="common">Freshwater pearl mussel</name>
    <dbReference type="NCBI Taxonomy" id="102329"/>
    <lineage>
        <taxon>Eukaryota</taxon>
        <taxon>Metazoa</taxon>
        <taxon>Spiralia</taxon>
        <taxon>Lophotrochozoa</taxon>
        <taxon>Mollusca</taxon>
        <taxon>Bivalvia</taxon>
        <taxon>Autobranchia</taxon>
        <taxon>Pteriomorphia</taxon>
        <taxon>Pterioida</taxon>
        <taxon>Pterioidea</taxon>
        <taxon>Pteriidae</taxon>
        <taxon>Pinctada</taxon>
    </lineage>
</organism>
<comment type="subcellular location">
    <subcellularLocation>
        <location evidence="2">Secreted</location>
    </subcellularLocation>
</comment>
<comment type="tissue specificity">
    <text evidence="2">Prismatic layer of shell (at protein level).</text>
</comment>
<evidence type="ECO:0000255" key="1"/>
<evidence type="ECO:0000269" key="2">
    <source>
    </source>
</evidence>
<evidence type="ECO:0000305" key="3"/>
<name>USP2_PINMG</name>
<keyword id="KW-0903">Direct protein sequencing</keyword>
<keyword id="KW-0964">Secreted</keyword>
<keyword id="KW-0732">Signal</keyword>
<proteinExistence type="evidence at protein level"/>
<dbReference type="EMBL" id="HE610392">
    <property type="protein sequence ID" value="CCE46166.1"/>
    <property type="molecule type" value="mRNA"/>
</dbReference>
<dbReference type="GO" id="GO:0005576">
    <property type="term" value="C:extracellular region"/>
    <property type="evidence" value="ECO:0007669"/>
    <property type="project" value="UniProtKB-SubCell"/>
</dbReference>